<gene>
    <name evidence="1" type="primary">ppc</name>
    <name type="ordered locus">UTI89_C4547</name>
</gene>
<dbReference type="EC" id="4.1.1.31" evidence="1"/>
<dbReference type="EMBL" id="CP000243">
    <property type="protein sequence ID" value="ABE09959.1"/>
    <property type="molecule type" value="Genomic_DNA"/>
</dbReference>
<dbReference type="RefSeq" id="WP_001005584.1">
    <property type="nucleotide sequence ID" value="NZ_CP064825.1"/>
</dbReference>
<dbReference type="SMR" id="Q1R3V5"/>
<dbReference type="KEGG" id="eci:UTI89_C4547"/>
<dbReference type="HOGENOM" id="CLU_006557_2_0_6"/>
<dbReference type="Proteomes" id="UP000001952">
    <property type="component" value="Chromosome"/>
</dbReference>
<dbReference type="GO" id="GO:0005829">
    <property type="term" value="C:cytosol"/>
    <property type="evidence" value="ECO:0007669"/>
    <property type="project" value="TreeGrafter"/>
</dbReference>
<dbReference type="GO" id="GO:0000287">
    <property type="term" value="F:magnesium ion binding"/>
    <property type="evidence" value="ECO:0007669"/>
    <property type="project" value="UniProtKB-UniRule"/>
</dbReference>
<dbReference type="GO" id="GO:0008964">
    <property type="term" value="F:phosphoenolpyruvate carboxylase activity"/>
    <property type="evidence" value="ECO:0007669"/>
    <property type="project" value="UniProtKB-UniRule"/>
</dbReference>
<dbReference type="GO" id="GO:0015977">
    <property type="term" value="P:carbon fixation"/>
    <property type="evidence" value="ECO:0007669"/>
    <property type="project" value="UniProtKB-UniRule"/>
</dbReference>
<dbReference type="GO" id="GO:0006107">
    <property type="term" value="P:oxaloacetate metabolic process"/>
    <property type="evidence" value="ECO:0007669"/>
    <property type="project" value="UniProtKB-UniRule"/>
</dbReference>
<dbReference type="GO" id="GO:0006099">
    <property type="term" value="P:tricarboxylic acid cycle"/>
    <property type="evidence" value="ECO:0007669"/>
    <property type="project" value="InterPro"/>
</dbReference>
<dbReference type="FunFam" id="1.20.1440.90:FF:000002">
    <property type="entry name" value="Phosphoenolpyruvate carboxylase"/>
    <property type="match status" value="1"/>
</dbReference>
<dbReference type="Gene3D" id="1.20.1440.90">
    <property type="entry name" value="Phosphoenolpyruvate/pyruvate domain"/>
    <property type="match status" value="1"/>
</dbReference>
<dbReference type="HAMAP" id="MF_00595">
    <property type="entry name" value="PEPcase_type1"/>
    <property type="match status" value="1"/>
</dbReference>
<dbReference type="InterPro" id="IPR021135">
    <property type="entry name" value="PEP_COase"/>
</dbReference>
<dbReference type="InterPro" id="IPR022805">
    <property type="entry name" value="PEP_COase_bac/pln-type"/>
</dbReference>
<dbReference type="InterPro" id="IPR018129">
    <property type="entry name" value="PEP_COase_Lys_AS"/>
</dbReference>
<dbReference type="InterPro" id="IPR033129">
    <property type="entry name" value="PEPCASE_His_AS"/>
</dbReference>
<dbReference type="InterPro" id="IPR015813">
    <property type="entry name" value="Pyrv/PenolPyrv_kinase-like_dom"/>
</dbReference>
<dbReference type="NCBIfam" id="NF000584">
    <property type="entry name" value="PRK00009.1"/>
    <property type="match status" value="1"/>
</dbReference>
<dbReference type="PANTHER" id="PTHR30523">
    <property type="entry name" value="PHOSPHOENOLPYRUVATE CARBOXYLASE"/>
    <property type="match status" value="1"/>
</dbReference>
<dbReference type="PANTHER" id="PTHR30523:SF6">
    <property type="entry name" value="PHOSPHOENOLPYRUVATE CARBOXYLASE"/>
    <property type="match status" value="1"/>
</dbReference>
<dbReference type="Pfam" id="PF00311">
    <property type="entry name" value="PEPcase"/>
    <property type="match status" value="1"/>
</dbReference>
<dbReference type="PRINTS" id="PR00150">
    <property type="entry name" value="PEPCARBXLASE"/>
</dbReference>
<dbReference type="SUPFAM" id="SSF51621">
    <property type="entry name" value="Phosphoenolpyruvate/pyruvate domain"/>
    <property type="match status" value="1"/>
</dbReference>
<dbReference type="PROSITE" id="PS00781">
    <property type="entry name" value="PEPCASE_1"/>
    <property type="match status" value="1"/>
</dbReference>
<dbReference type="PROSITE" id="PS00393">
    <property type="entry name" value="PEPCASE_2"/>
    <property type="match status" value="1"/>
</dbReference>
<protein>
    <recommendedName>
        <fullName evidence="1">Phosphoenolpyruvate carboxylase</fullName>
        <shortName evidence="1">PEPC</shortName>
        <shortName evidence="1">PEPCase</shortName>
        <ecNumber evidence="1">4.1.1.31</ecNumber>
    </recommendedName>
</protein>
<keyword id="KW-0120">Carbon dioxide fixation</keyword>
<keyword id="KW-0456">Lyase</keyword>
<keyword id="KW-0460">Magnesium</keyword>
<name>CAPP_ECOUT</name>
<organism>
    <name type="scientific">Escherichia coli (strain UTI89 / UPEC)</name>
    <dbReference type="NCBI Taxonomy" id="364106"/>
    <lineage>
        <taxon>Bacteria</taxon>
        <taxon>Pseudomonadati</taxon>
        <taxon>Pseudomonadota</taxon>
        <taxon>Gammaproteobacteria</taxon>
        <taxon>Enterobacterales</taxon>
        <taxon>Enterobacteriaceae</taxon>
        <taxon>Escherichia</taxon>
    </lineage>
</organism>
<evidence type="ECO:0000255" key="1">
    <source>
        <dbReference type="HAMAP-Rule" id="MF_00595"/>
    </source>
</evidence>
<reference key="1">
    <citation type="journal article" date="2006" name="Proc. Natl. Acad. Sci. U.S.A.">
        <title>Identification of genes subject to positive selection in uropathogenic strains of Escherichia coli: a comparative genomics approach.</title>
        <authorList>
            <person name="Chen S.L."/>
            <person name="Hung C.-S."/>
            <person name="Xu J."/>
            <person name="Reigstad C.S."/>
            <person name="Magrini V."/>
            <person name="Sabo A."/>
            <person name="Blasiar D."/>
            <person name="Bieri T."/>
            <person name="Meyer R.R."/>
            <person name="Ozersky P."/>
            <person name="Armstrong J.R."/>
            <person name="Fulton R.S."/>
            <person name="Latreille J.P."/>
            <person name="Spieth J."/>
            <person name="Hooton T.M."/>
            <person name="Mardis E.R."/>
            <person name="Hultgren S.J."/>
            <person name="Gordon J.I."/>
        </authorList>
    </citation>
    <scope>NUCLEOTIDE SEQUENCE [LARGE SCALE GENOMIC DNA]</scope>
    <source>
        <strain>UTI89 / UPEC</strain>
    </source>
</reference>
<comment type="function">
    <text evidence="1">Forms oxaloacetate, a four-carbon dicarboxylic acid source for the tricarboxylic acid cycle.</text>
</comment>
<comment type="catalytic activity">
    <reaction evidence="1">
        <text>oxaloacetate + phosphate = phosphoenolpyruvate + hydrogencarbonate</text>
        <dbReference type="Rhea" id="RHEA:28370"/>
        <dbReference type="ChEBI" id="CHEBI:16452"/>
        <dbReference type="ChEBI" id="CHEBI:17544"/>
        <dbReference type="ChEBI" id="CHEBI:43474"/>
        <dbReference type="ChEBI" id="CHEBI:58702"/>
        <dbReference type="EC" id="4.1.1.31"/>
    </reaction>
</comment>
<comment type="cofactor">
    <cofactor evidence="1">
        <name>Mg(2+)</name>
        <dbReference type="ChEBI" id="CHEBI:18420"/>
    </cofactor>
</comment>
<comment type="similarity">
    <text evidence="1">Belongs to the PEPCase type 1 family.</text>
</comment>
<feature type="chain" id="PRO_1000025558" description="Phosphoenolpyruvate carboxylase">
    <location>
        <begin position="1"/>
        <end position="883"/>
    </location>
</feature>
<feature type="active site" evidence="1">
    <location>
        <position position="138"/>
    </location>
</feature>
<feature type="active site" evidence="1">
    <location>
        <position position="546"/>
    </location>
</feature>
<proteinExistence type="inferred from homology"/>
<sequence length="883" mass="99090">MNEQYSALRSNVSMLGKVLGETIKDALGEHILERVETIRKLSKSSRAGNDANRQELLTTLQNLSNDELLPVARAFSQFLNLANTAEQYHSISPKGEAASNPEVIARTLRKLKNQPELSEDTIKKAVESLSLELVLTAHPTEITRRTLIHKMVEVNACLKQLDNKDIADYEHNQLMRRLRQLIAQSWHTDEIRKLRPSPVDEAKWGFAVVENSLWQGVPNYLRELNEQLEENLGYKLPVEFVPVRFTSWMGGDRDGNPNVTADITRHVLLLSRWKATDLFLKDIQVLVSELSMVEATPELLALVGEEGAAEPYRYLMKNLRSRLMATQAWLEARLKGEELPKPEGLLTQNEELWEPLYACYQSLQACGMGIIANGDLLDTLRRVKCFGVPLVRIDIRQESTRHTEALGELTRYLGIGDYESWSEADKQAFLIRELNSKRPLLPRNWQPSAETREVLDTCQVIAEAPQGSIAAYVISMAKTPSDVLAVHLLLKEAGIGFAMPVAPLFETLDDLNNANDVMTQLLNIDWYRGLIQGKQMVMIGYSDSAKDAGVMAASWAQYQAQDALIKTCEKAGIELTLFHGRGGSIGRGGAPAHAALLSQPPGSLKGGLRVTEQGEMIRFKYGLPEITVSSLSLYTGAILEANLLPPPEPKESWRRIMDELSVISCDVYRGYVRENKDFVPYFRSATPEQELGKLPLGSRPAKRRPTGGVESLRAIPWIFAWTQNRLMLPAWLGAGTALQKVVEDGKQNELEAMCRDWPFFSTRLGMLEMVFAKADLWLAEYYDQRLVDKALWPLGKELRNLQEEDIKVVLAIANDSHLMADLPWIAESIQLRNIYTDPLNVLQAELLHRSRQAEKEGQEPDPRVEQALMVTIAGIAAGMRNTG</sequence>
<accession>Q1R3V5</accession>